<organism>
    <name type="scientific">Homo sapiens</name>
    <name type="common">Human</name>
    <dbReference type="NCBI Taxonomy" id="9606"/>
    <lineage>
        <taxon>Eukaryota</taxon>
        <taxon>Metazoa</taxon>
        <taxon>Chordata</taxon>
        <taxon>Craniata</taxon>
        <taxon>Vertebrata</taxon>
        <taxon>Euteleostomi</taxon>
        <taxon>Mammalia</taxon>
        <taxon>Eutheria</taxon>
        <taxon>Euarchontoglires</taxon>
        <taxon>Primates</taxon>
        <taxon>Haplorrhini</taxon>
        <taxon>Catarrhini</taxon>
        <taxon>Hominidae</taxon>
        <taxon>Homo</taxon>
    </lineage>
</organism>
<sequence>MAMASPAIGQRPYPLLLDPEPPRYLQSLSGPELPPPPPDRSSRLCVPAPLSTAPGAREGRSARRAARGNLEPPPRASRPARPLRPGLQQRLRRRPGAPRPRDVRSIFEQPQDPRVPAERGEGHCFAELVLPGGPGWCDLCGREVLRQALRCTNCKFTCHPECRSLIQLDCSQQEGLSRDRPSPESTLTVTFSQNVCKPVEETQRPPTLQEIKQKIDSYNTREKNCLGMKLSEDGTYTGFIKVHLKLRRPVTVPAGIRPQSIYDAIKEVNLAATTDKRTSFYLPLDAIKQLHISSTTTVSEVIQGLLKKFMVVDNPQKFALFKRIHKDGQVLFQKLSIADRPLYLRLLAGPDTEVLSFVLKENETGEVEWDAFSIPELQNFLTILEKEEQDKIQQVQKKYDKFRQKLEEALRESQGKPG</sequence>
<comment type="function">
    <text evidence="7 8 10">Potential tumor suppressor. Seems to be involved in lymphocyte adhesion by linking RAP1A activation upon T-cell receptor or chemokine stimulation to integrin activation. Isoform 2 stimulates lymphocyte polarization and the patch-like distribution of ITGAL/LFA-1, resulting in an enhanced adhesion to ICAM1. Together with RAP1A may participate in regulation of microtubule growth. The association of isoform 2 with activated RAP1A is required for directional movement of endothelial cells during wound healing. May be involved in regulation of Ras apoptotic function. The RASSF5-STK4/MST1 complex may mediate HRAS and KRAS induced apoptosis.</text>
</comment>
<comment type="subunit">
    <text evidence="1 8 9 10 11">Interacts directly with activated HRAS; a RASSF5-STK4/MST1 complex probably associates with activated HRAS (By similarity). Interacts with KRAS (By similarity). Probably interacts with Ras-like GTPases RRAS, MRAS, RAP1B, RAP2A and RALA (By similarity). Interacts with RRAS2 (PubMed:31130282). Can self-associate (By similarity). Interacts with RSSF1 isoform A (By similarity). The RSSF1 isoform A-RSSF5 heterodimer probably mediates the association of RSSF1 with HRAS (By similarity). Isoform 2 interacts with activated RAP1A and ITGAL/LFA-1 (PubMed:12845325, PubMed:15569673). Binds STK4/MST1, inhibiting STK4/MST1 autoactivation (PubMed:15109305).</text>
</comment>
<comment type="interaction">
    <interactant intactId="EBI-367390">
        <id>Q8WWW0</id>
    </interactant>
    <interactant intactId="EBI-10187270">
        <id>Q9Y2J4-4</id>
        <label>AMOTL2</label>
    </interactant>
    <organismsDiffer>false</organismsDiffer>
    <experiments>3</experiments>
</comment>
<comment type="interaction">
    <interactant intactId="EBI-367390">
        <id>Q8WWW0</id>
    </interactant>
    <interactant intactId="EBI-307461">
        <id>Q9Y297</id>
        <label>BTRC</label>
    </interactant>
    <organismsDiffer>false</organismsDiffer>
    <experiments>4</experiments>
</comment>
<comment type="interaction">
    <interactant intactId="EBI-367390">
        <id>Q8WWW0</id>
    </interactant>
    <interactant intactId="EBI-712001">
        <id>O95166</id>
        <label>GABARAP</label>
    </interactant>
    <organismsDiffer>false</organismsDiffer>
    <experiments>2</experiments>
</comment>
<comment type="interaction">
    <interactant intactId="EBI-367390">
        <id>Q8WWW0</id>
    </interactant>
    <interactant intactId="EBI-746969">
        <id>Q9H0R8</id>
        <label>GABARAPL1</label>
    </interactant>
    <organismsDiffer>false</organismsDiffer>
    <experiments>2</experiments>
</comment>
<comment type="interaction">
    <interactant intactId="EBI-367390">
        <id>Q8WWW0</id>
    </interactant>
    <interactant intactId="EBI-720116">
        <id>P60520</id>
        <label>GABARAPL2</label>
    </interactant>
    <organismsDiffer>false</organismsDiffer>
    <experiments>2</experiments>
</comment>
<comment type="interaction">
    <interactant intactId="EBI-367390">
        <id>Q8WWW0</id>
    </interactant>
    <interactant intactId="EBI-350145">
        <id>P01112</id>
        <label>HRAS</label>
    </interactant>
    <organismsDiffer>false</organismsDiffer>
    <experiments>2</experiments>
</comment>
<comment type="interaction">
    <interactant intactId="EBI-367390">
        <id>Q8WWW0</id>
    </interactant>
    <interactant intactId="EBI-10171697">
        <id>Q6A162</id>
        <label>KRT40</label>
    </interactant>
    <organismsDiffer>false</organismsDiffer>
    <experiments>3</experiments>
</comment>
<comment type="interaction">
    <interactant intactId="EBI-367390">
        <id>Q8WWW0</id>
    </interactant>
    <interactant intactId="EBI-10172511">
        <id>Q9BYR5</id>
        <label>KRTAP4-2</label>
    </interactant>
    <organismsDiffer>false</organismsDiffer>
    <experiments>3</experiments>
</comment>
<comment type="interaction">
    <interactant intactId="EBI-367390">
        <id>Q8WWW0</id>
    </interactant>
    <interactant intactId="EBI-373144">
        <id>Q9GZQ8</id>
        <label>MAP1LC3B</label>
    </interactant>
    <organismsDiffer>false</organismsDiffer>
    <experiments>5</experiments>
</comment>
<comment type="interaction">
    <interactant intactId="EBI-367390">
        <id>Q8WWW0</id>
    </interactant>
    <interactant intactId="EBI-2603996">
        <id>Q9BXW4</id>
        <label>MAP1LC3C</label>
    </interactant>
    <organismsDiffer>false</organismsDiffer>
    <experiments>2</experiments>
</comment>
<comment type="interaction">
    <interactant intactId="EBI-367390">
        <id>Q8WWW0</id>
    </interactant>
    <interactant intactId="EBI-6952711">
        <id>Q8WY64</id>
        <label>MYLIP</label>
    </interactant>
    <organismsDiffer>false</organismsDiffer>
    <experiments>4</experiments>
</comment>
<comment type="interaction">
    <interactant intactId="EBI-367390">
        <id>Q8WWW0</id>
    </interactant>
    <interactant intactId="EBI-713992">
        <id>P47224</id>
        <label>RABIF</label>
    </interactant>
    <organismsDiffer>false</organismsDiffer>
    <experiments>3</experiments>
</comment>
<comment type="interaction">
    <interactant intactId="EBI-367390">
        <id>Q8WWW0</id>
    </interactant>
    <interactant intactId="EBI-358143">
        <id>P61224</id>
        <label>RAP1B</label>
    </interactant>
    <organismsDiffer>false</organismsDiffer>
    <experiments>3</experiments>
</comment>
<comment type="interaction">
    <interactant intactId="EBI-367390">
        <id>Q8WWW0</id>
    </interactant>
    <interactant intactId="EBI-750871">
        <id>P61225</id>
        <label>RAP2B</label>
    </interactant>
    <organismsDiffer>false</organismsDiffer>
    <experiments>3</experiments>
</comment>
<comment type="interaction">
    <interactant intactId="EBI-367390">
        <id>Q8WWW0</id>
    </interactant>
    <interactant intactId="EBI-960081">
        <id>P50749</id>
        <label>RASSF2</label>
    </interactant>
    <organismsDiffer>false</organismsDiffer>
    <experiments>3</experiments>
</comment>
<comment type="interaction">
    <interactant intactId="EBI-367390">
        <id>Q8WWW0</id>
    </interactant>
    <interactant intactId="EBI-307352">
        <id>Q04864</id>
        <label>REL</label>
    </interactant>
    <organismsDiffer>false</organismsDiffer>
    <experiments>3</experiments>
</comment>
<comment type="interaction">
    <interactant intactId="EBI-367390">
        <id>Q8WWW0</id>
    </interactant>
    <interactant intactId="EBI-347263">
        <id>Q13485</id>
        <label>SMAD4</label>
    </interactant>
    <organismsDiffer>false</organismsDiffer>
    <experiments>5</experiments>
</comment>
<comment type="interaction">
    <interactant intactId="EBI-367390">
        <id>Q8WWW0</id>
    </interactant>
    <interactant intactId="EBI-992580">
        <id>Q13188</id>
        <label>STK3</label>
    </interactant>
    <organismsDiffer>false</organismsDiffer>
    <experiments>9</experiments>
</comment>
<comment type="interaction">
    <interactant intactId="EBI-367390">
        <id>Q8WWW0</id>
    </interactant>
    <interactant intactId="EBI-367376">
        <id>Q13043</id>
        <label>STK4</label>
    </interactant>
    <organismsDiffer>false</organismsDiffer>
    <experiments>9</experiments>
</comment>
<comment type="interaction">
    <interactant intactId="EBI-367390">
        <id>Q8WWW0</id>
    </interactant>
    <interactant intactId="EBI-359224">
        <id>Q13077</id>
        <label>TRAF1</label>
    </interactant>
    <organismsDiffer>false</organismsDiffer>
    <experiments>3</experiments>
</comment>
<comment type="interaction">
    <interactant intactId="EBI-367390">
        <id>Q8WWW0</id>
    </interactant>
    <interactant intactId="EBI-355744">
        <id>Q12933</id>
        <label>TRAF2</label>
    </interactant>
    <organismsDiffer>false</organismsDiffer>
    <experiments>3</experiments>
</comment>
<comment type="interaction">
    <interactant intactId="EBI-367390">
        <id>Q8WWW0</id>
    </interactant>
    <interactant intactId="EBI-10243107">
        <id>Q548N1</id>
        <label>VPS28</label>
    </interactant>
    <organismsDiffer>false</organismsDiffer>
    <experiments>3</experiments>
</comment>
<comment type="interaction">
    <interactant intactId="EBI-367390">
        <id>Q8WWW0</id>
    </interactant>
    <interactant intactId="EBI-10174788">
        <id>A8K940</id>
    </interactant>
    <organismsDiffer>false</organismsDiffer>
    <experiments>3</experiments>
</comment>
<comment type="interaction">
    <interactant intactId="EBI-960496">
        <id>Q8WWW0-1</id>
    </interactant>
    <interactant intactId="EBI-960496">
        <id>Q8WWW0-1</id>
        <label>RASSF5</label>
    </interactant>
    <organismsDiffer>false</organismsDiffer>
    <experiments>2</experiments>
</comment>
<comment type="interaction">
    <interactant intactId="EBI-960496">
        <id>Q8WWW0-1</id>
    </interactant>
    <interactant intactId="EBI-992580">
        <id>Q13188</id>
        <label>STK3</label>
    </interactant>
    <organismsDiffer>false</organismsDiffer>
    <experiments>6</experiments>
</comment>
<comment type="interaction">
    <interactant intactId="EBI-960496">
        <id>Q8WWW0-1</id>
    </interactant>
    <interactant intactId="EBI-15638366">
        <id>Q13043-1</id>
        <label>STK4</label>
    </interactant>
    <organismsDiffer>false</organismsDiffer>
    <experiments>3</experiments>
</comment>
<comment type="interaction">
    <interactant intactId="EBI-960502">
        <id>Q8WWW0-2</id>
    </interactant>
    <interactant intactId="EBI-16429247">
        <id>A0A0S2Z507</id>
        <label>BTRC</label>
    </interactant>
    <organismsDiffer>false</organismsDiffer>
    <experiments>3</experiments>
</comment>
<comment type="interaction">
    <interactant intactId="EBI-960502">
        <id>Q8WWW0-2</id>
    </interactant>
    <interactant intactId="EBI-307461">
        <id>Q9Y297</id>
        <label>BTRC</label>
    </interactant>
    <organismsDiffer>false</organismsDiffer>
    <experiments>3</experiments>
</comment>
<comment type="interaction">
    <interactant intactId="EBI-960502">
        <id>Q8WWW0-2</id>
    </interactant>
    <interactant intactId="EBI-744302">
        <id>P14136</id>
        <label>GFAP</label>
    </interactant>
    <organismsDiffer>false</organismsDiffer>
    <experiments>3</experiments>
</comment>
<comment type="interaction">
    <interactant intactId="EBI-960502">
        <id>Q8WWW0-2</id>
    </interactant>
    <interactant intactId="EBI-466029">
        <id>P42858</id>
        <label>HTT</label>
    </interactant>
    <organismsDiffer>false</organismsDiffer>
    <experiments>3</experiments>
</comment>
<comment type="interaction">
    <interactant intactId="EBI-960502">
        <id>Q8WWW0-2</id>
    </interactant>
    <interactant intactId="EBI-1055254">
        <id>Q8WXH2</id>
        <label>JPH3</label>
    </interactant>
    <organismsDiffer>false</organismsDiffer>
    <experiments>3</experiments>
</comment>
<comment type="interaction">
    <interactant intactId="EBI-960502">
        <id>Q8WWW0-2</id>
    </interactant>
    <interactant intactId="EBI-1189067">
        <id>P51608</id>
        <label>MECP2</label>
    </interactant>
    <organismsDiffer>false</organismsDiffer>
    <experiments>3</experiments>
</comment>
<comment type="interaction">
    <interactant intactId="EBI-960502">
        <id>Q8WWW0-2</id>
    </interactant>
    <interactant intactId="EBI-713665">
        <id>P19404</id>
        <label>NDUFV2</label>
    </interactant>
    <organismsDiffer>false</organismsDiffer>
    <experiments>3</experiments>
</comment>
<comment type="interaction">
    <interactant intactId="EBI-960502">
        <id>Q8WWW0-2</id>
    </interactant>
    <interactant intactId="EBI-491414">
        <id>P62834</id>
        <label>RAP1A</label>
    </interactant>
    <organismsDiffer>false</organismsDiffer>
    <experiments>3</experiments>
</comment>
<comment type="interaction">
    <interactant intactId="EBI-960502">
        <id>Q8WWW0-2</id>
    </interactant>
    <interactant intactId="EBI-367376">
        <id>Q13043</id>
        <label>STK4</label>
    </interactant>
    <organismsDiffer>false</organismsDiffer>
    <experiments>4</experiments>
</comment>
<comment type="interaction">
    <interactant intactId="EBI-960502">
        <id>Q8WWW0-2</id>
    </interactant>
    <interactant intactId="EBI-727424">
        <id>Q9UK41</id>
        <label>VPS28</label>
    </interactant>
    <organismsDiffer>false</organismsDiffer>
    <experiments>3</experiments>
</comment>
<comment type="interaction">
    <interactant intactId="EBI-960507">
        <id>Q8WWW0-3</id>
    </interactant>
    <interactant intactId="EBI-367376">
        <id>Q13043</id>
        <label>STK4</label>
    </interactant>
    <organismsDiffer>false</organismsDiffer>
    <experiments>2</experiments>
</comment>
<comment type="subcellular location">
    <subcellularLocation>
        <location>Cytoplasm</location>
    </subcellularLocation>
    <subcellularLocation>
        <location>Cytoplasm</location>
        <location>Cytoskeleton</location>
    </subcellularLocation>
    <text>Isoform 2 is mainly located in the perinuclear region of unstimulated primary T-cells. Upon stimulation translocates to the leading edge and colocalizes with ITGAL/LFA-1 in the peripheral zone of the immunological synapse. Isoform 2 is localized to growing microtubules in vascular endothelial cells and is dissociated from microtubules by activated RAP1A.</text>
</comment>
<comment type="alternative products">
    <event type="alternative splicing"/>
    <isoform>
        <id>Q8WWW0-1</id>
        <name>1</name>
        <name>A</name>
        <name>NORE1A</name>
        <sequence type="displayed"/>
    </isoform>
    <isoform>
        <id>Q8WWW0-2</id>
        <name>2</name>
        <name>B</name>
        <sequence type="described" ref="VSP_019363 VSP_019364"/>
    </isoform>
    <isoform>
        <id>Q8WWW0-3</id>
        <name>3</name>
        <name>C</name>
        <name>NORE1B</name>
        <sequence type="described" ref="VSP_019365 VSP_019366"/>
    </isoform>
</comment>
<comment type="tissue specificity">
    <text evidence="6 7">Widely expressed. Frequently down-regulated in lung tumor cell lines and primary lung tumors.</text>
</comment>
<comment type="caution">
    <text evidence="17">Was termed (Ref.3) RASSF3.</text>
</comment>
<comment type="sequence caution" evidence="17">
    <conflict type="erroneous initiation">
        <sequence resource="EMBL-CDS" id="AAH04270"/>
    </conflict>
    <text>Truncated N-terminus.</text>
</comment>
<comment type="sequence caution" evidence="17">
    <conflict type="miscellaneous discrepancy">
        <sequence resource="EMBL-CDS" id="AAH04270"/>
    </conflict>
    <text>Aberrant splicing.</text>
</comment>
<comment type="sequence caution" evidence="17">
    <conflict type="erroneous initiation">
        <sequence resource="EMBL-CDS" id="AAH07203"/>
    </conflict>
    <text>Truncated N-terminus.</text>
</comment>
<comment type="sequence caution" evidence="17">
    <conflict type="miscellaneous discrepancy">
        <sequence resource="EMBL-CDS" id="AAH07203"/>
    </conflict>
    <text>Aberrant splicing.</text>
</comment>
<comment type="online information" name="Atlas of Genetics and Cytogenetics in Oncology and Haematology">
    <link uri="https://atlasgeneticsoncology.org/gene/42059/RASSF5"/>
</comment>
<accession>Q8WWW0</accession>
<accession>A8K1E6</accession>
<accession>Q5SY32</accession>
<accession>Q8WWV9</accession>
<accession>Q8WXF4</accession>
<accession>Q9BT99</accession>
<gene>
    <name type="primary">RASSF5</name>
    <name type="synonym">NORE1</name>
    <name type="synonym">RAPL</name>
</gene>
<proteinExistence type="evidence at protein level"/>
<reference key="1">
    <citation type="journal article" date="2002" name="Oncogene">
        <title>RASSF3 and NORE1: identification and cloning of two human homologues of the putative tumor suppressor gene RASSF1.</title>
        <authorList>
            <person name="Tommasi S."/>
            <person name="Dammann R."/>
            <person name="Jin S.-G."/>
            <person name="Zhang X.-F."/>
            <person name="Avruch J."/>
            <person name="Pfeifer G.P."/>
        </authorList>
    </citation>
    <scope>NUCLEOTIDE SEQUENCE [MRNA] (ISOFORM 2)</scope>
    <scope>ALTERNATIVE SPLICING</scope>
    <scope>TISSUE SPECIFICITY</scope>
</reference>
<reference key="2">
    <citation type="journal article" date="2003" name="Nat. Immunol.">
        <title>RAPL, a Rap1-binding molecule that mediates Rap1-induced adhesion through spatial regulation of LFA-1.</title>
        <authorList>
            <person name="Katagiri K."/>
            <person name="Maeda A."/>
            <person name="Shimonaka M."/>
            <person name="Kinashi T."/>
        </authorList>
    </citation>
    <scope>NUCLEOTIDE SEQUENCE [MRNA] (ISOFORM 2)</scope>
    <scope>FUNCTION IN INTEGRIN ACTIVATION</scope>
    <scope>INTERACTION WITH RAP1A AND ITGAL</scope>
    <scope>SUBCELLULAR LOCATION</scope>
</reference>
<reference key="3">
    <citation type="submission" date="2001-11" db="EMBL/GenBank/DDBJ databases">
        <title>RASSF3 is regulated by methylation in lung and breast tumor cell lines.</title>
        <authorList>
            <person name="Burbee D.G."/>
            <person name="White M.A."/>
            <person name="Minna J.D."/>
        </authorList>
    </citation>
    <scope>NUCLEOTIDE SEQUENCE [MRNA] (ISOFORMS 1; 2 AND 3)</scope>
</reference>
<reference key="4">
    <citation type="journal article" date="2004" name="Nat. Genet.">
        <title>Complete sequencing and characterization of 21,243 full-length human cDNAs.</title>
        <authorList>
            <person name="Ota T."/>
            <person name="Suzuki Y."/>
            <person name="Nishikawa T."/>
            <person name="Otsuki T."/>
            <person name="Sugiyama T."/>
            <person name="Irie R."/>
            <person name="Wakamatsu A."/>
            <person name="Hayashi K."/>
            <person name="Sato H."/>
            <person name="Nagai K."/>
            <person name="Kimura K."/>
            <person name="Makita H."/>
            <person name="Sekine M."/>
            <person name="Obayashi M."/>
            <person name="Nishi T."/>
            <person name="Shibahara T."/>
            <person name="Tanaka T."/>
            <person name="Ishii S."/>
            <person name="Yamamoto J."/>
            <person name="Saito K."/>
            <person name="Kawai Y."/>
            <person name="Isono Y."/>
            <person name="Nakamura Y."/>
            <person name="Nagahari K."/>
            <person name="Murakami K."/>
            <person name="Yasuda T."/>
            <person name="Iwayanagi T."/>
            <person name="Wagatsuma M."/>
            <person name="Shiratori A."/>
            <person name="Sudo H."/>
            <person name="Hosoiri T."/>
            <person name="Kaku Y."/>
            <person name="Kodaira H."/>
            <person name="Kondo H."/>
            <person name="Sugawara M."/>
            <person name="Takahashi M."/>
            <person name="Kanda K."/>
            <person name="Yokoi T."/>
            <person name="Furuya T."/>
            <person name="Kikkawa E."/>
            <person name="Omura Y."/>
            <person name="Abe K."/>
            <person name="Kamihara K."/>
            <person name="Katsuta N."/>
            <person name="Sato K."/>
            <person name="Tanikawa M."/>
            <person name="Yamazaki M."/>
            <person name="Ninomiya K."/>
            <person name="Ishibashi T."/>
            <person name="Yamashita H."/>
            <person name="Murakawa K."/>
            <person name="Fujimori K."/>
            <person name="Tanai H."/>
            <person name="Kimata M."/>
            <person name="Watanabe M."/>
            <person name="Hiraoka S."/>
            <person name="Chiba Y."/>
            <person name="Ishida S."/>
            <person name="Ono Y."/>
            <person name="Takiguchi S."/>
            <person name="Watanabe S."/>
            <person name="Yosida M."/>
            <person name="Hotuta T."/>
            <person name="Kusano J."/>
            <person name="Kanehori K."/>
            <person name="Takahashi-Fujii A."/>
            <person name="Hara H."/>
            <person name="Tanase T.-O."/>
            <person name="Nomura Y."/>
            <person name="Togiya S."/>
            <person name="Komai F."/>
            <person name="Hara R."/>
            <person name="Takeuchi K."/>
            <person name="Arita M."/>
            <person name="Imose N."/>
            <person name="Musashino K."/>
            <person name="Yuuki H."/>
            <person name="Oshima A."/>
            <person name="Sasaki N."/>
            <person name="Aotsuka S."/>
            <person name="Yoshikawa Y."/>
            <person name="Matsunawa H."/>
            <person name="Ichihara T."/>
            <person name="Shiohata N."/>
            <person name="Sano S."/>
            <person name="Moriya S."/>
            <person name="Momiyama H."/>
            <person name="Satoh N."/>
            <person name="Takami S."/>
            <person name="Terashima Y."/>
            <person name="Suzuki O."/>
            <person name="Nakagawa S."/>
            <person name="Senoh A."/>
            <person name="Mizoguchi H."/>
            <person name="Goto Y."/>
            <person name="Shimizu F."/>
            <person name="Wakebe H."/>
            <person name="Hishigaki H."/>
            <person name="Watanabe T."/>
            <person name="Sugiyama A."/>
            <person name="Takemoto M."/>
            <person name="Kawakami B."/>
            <person name="Yamazaki M."/>
            <person name="Watanabe K."/>
            <person name="Kumagai A."/>
            <person name="Itakura S."/>
            <person name="Fukuzumi Y."/>
            <person name="Fujimori Y."/>
            <person name="Komiyama M."/>
            <person name="Tashiro H."/>
            <person name="Tanigami A."/>
            <person name="Fujiwara T."/>
            <person name="Ono T."/>
            <person name="Yamada K."/>
            <person name="Fujii Y."/>
            <person name="Ozaki K."/>
            <person name="Hirao M."/>
            <person name="Ohmori Y."/>
            <person name="Kawabata A."/>
            <person name="Hikiji T."/>
            <person name="Kobatake N."/>
            <person name="Inagaki H."/>
            <person name="Ikema Y."/>
            <person name="Okamoto S."/>
            <person name="Okitani R."/>
            <person name="Kawakami T."/>
            <person name="Noguchi S."/>
            <person name="Itoh T."/>
            <person name="Shigeta K."/>
            <person name="Senba T."/>
            <person name="Matsumura K."/>
            <person name="Nakajima Y."/>
            <person name="Mizuno T."/>
            <person name="Morinaga M."/>
            <person name="Sasaki M."/>
            <person name="Togashi T."/>
            <person name="Oyama M."/>
            <person name="Hata H."/>
            <person name="Watanabe M."/>
            <person name="Komatsu T."/>
            <person name="Mizushima-Sugano J."/>
            <person name="Satoh T."/>
            <person name="Shirai Y."/>
            <person name="Takahashi Y."/>
            <person name="Nakagawa K."/>
            <person name="Okumura K."/>
            <person name="Nagase T."/>
            <person name="Nomura N."/>
            <person name="Kikuchi H."/>
            <person name="Masuho Y."/>
            <person name="Yamashita R."/>
            <person name="Nakai K."/>
            <person name="Yada T."/>
            <person name="Nakamura Y."/>
            <person name="Ohara O."/>
            <person name="Isogai T."/>
            <person name="Sugano S."/>
        </authorList>
    </citation>
    <scope>NUCLEOTIDE SEQUENCE [LARGE SCALE MRNA] (ISOFORM 1)</scope>
    <source>
        <tissue>Brain</tissue>
    </source>
</reference>
<reference key="5">
    <citation type="journal article" date="2007" name="BMC Genomics">
        <title>The full-ORF clone resource of the German cDNA consortium.</title>
        <authorList>
            <person name="Bechtel S."/>
            <person name="Rosenfelder H."/>
            <person name="Duda A."/>
            <person name="Schmidt C.P."/>
            <person name="Ernst U."/>
            <person name="Wellenreuther R."/>
            <person name="Mehrle A."/>
            <person name="Schuster C."/>
            <person name="Bahr A."/>
            <person name="Bloecker H."/>
            <person name="Heubner D."/>
            <person name="Hoerlein A."/>
            <person name="Michel G."/>
            <person name="Wedler H."/>
            <person name="Koehrer K."/>
            <person name="Ottenwaelder B."/>
            <person name="Poustka A."/>
            <person name="Wiemann S."/>
            <person name="Schupp I."/>
        </authorList>
    </citation>
    <scope>NUCLEOTIDE SEQUENCE [LARGE SCALE MRNA] (ISOFORM 2)</scope>
    <source>
        <tissue>Lymph node</tissue>
    </source>
</reference>
<reference key="6">
    <citation type="journal article" date="2006" name="Nature">
        <title>The DNA sequence and biological annotation of human chromosome 1.</title>
        <authorList>
            <person name="Gregory S.G."/>
            <person name="Barlow K.F."/>
            <person name="McLay K.E."/>
            <person name="Kaul R."/>
            <person name="Swarbreck D."/>
            <person name="Dunham A."/>
            <person name="Scott C.E."/>
            <person name="Howe K.L."/>
            <person name="Woodfine K."/>
            <person name="Spencer C.C.A."/>
            <person name="Jones M.C."/>
            <person name="Gillson C."/>
            <person name="Searle S."/>
            <person name="Zhou Y."/>
            <person name="Kokocinski F."/>
            <person name="McDonald L."/>
            <person name="Evans R."/>
            <person name="Phillips K."/>
            <person name="Atkinson A."/>
            <person name="Cooper R."/>
            <person name="Jones C."/>
            <person name="Hall R.E."/>
            <person name="Andrews T.D."/>
            <person name="Lloyd C."/>
            <person name="Ainscough R."/>
            <person name="Almeida J.P."/>
            <person name="Ambrose K.D."/>
            <person name="Anderson F."/>
            <person name="Andrew R.W."/>
            <person name="Ashwell R.I.S."/>
            <person name="Aubin K."/>
            <person name="Babbage A.K."/>
            <person name="Bagguley C.L."/>
            <person name="Bailey J."/>
            <person name="Beasley H."/>
            <person name="Bethel G."/>
            <person name="Bird C.P."/>
            <person name="Bray-Allen S."/>
            <person name="Brown J.Y."/>
            <person name="Brown A.J."/>
            <person name="Buckley D."/>
            <person name="Burton J."/>
            <person name="Bye J."/>
            <person name="Carder C."/>
            <person name="Chapman J.C."/>
            <person name="Clark S.Y."/>
            <person name="Clarke G."/>
            <person name="Clee C."/>
            <person name="Cobley V."/>
            <person name="Collier R.E."/>
            <person name="Corby N."/>
            <person name="Coville G.J."/>
            <person name="Davies J."/>
            <person name="Deadman R."/>
            <person name="Dunn M."/>
            <person name="Earthrowl M."/>
            <person name="Ellington A.G."/>
            <person name="Errington H."/>
            <person name="Frankish A."/>
            <person name="Frankland J."/>
            <person name="French L."/>
            <person name="Garner P."/>
            <person name="Garnett J."/>
            <person name="Gay L."/>
            <person name="Ghori M.R.J."/>
            <person name="Gibson R."/>
            <person name="Gilby L.M."/>
            <person name="Gillett W."/>
            <person name="Glithero R.J."/>
            <person name="Grafham D.V."/>
            <person name="Griffiths C."/>
            <person name="Griffiths-Jones S."/>
            <person name="Grocock R."/>
            <person name="Hammond S."/>
            <person name="Harrison E.S.I."/>
            <person name="Hart E."/>
            <person name="Haugen E."/>
            <person name="Heath P.D."/>
            <person name="Holmes S."/>
            <person name="Holt K."/>
            <person name="Howden P.J."/>
            <person name="Hunt A.R."/>
            <person name="Hunt S.E."/>
            <person name="Hunter G."/>
            <person name="Isherwood J."/>
            <person name="James R."/>
            <person name="Johnson C."/>
            <person name="Johnson D."/>
            <person name="Joy A."/>
            <person name="Kay M."/>
            <person name="Kershaw J.K."/>
            <person name="Kibukawa M."/>
            <person name="Kimberley A.M."/>
            <person name="King A."/>
            <person name="Knights A.J."/>
            <person name="Lad H."/>
            <person name="Laird G."/>
            <person name="Lawlor S."/>
            <person name="Leongamornlert D.A."/>
            <person name="Lloyd D.M."/>
            <person name="Loveland J."/>
            <person name="Lovell J."/>
            <person name="Lush M.J."/>
            <person name="Lyne R."/>
            <person name="Martin S."/>
            <person name="Mashreghi-Mohammadi M."/>
            <person name="Matthews L."/>
            <person name="Matthews N.S.W."/>
            <person name="McLaren S."/>
            <person name="Milne S."/>
            <person name="Mistry S."/>
            <person name="Moore M.J.F."/>
            <person name="Nickerson T."/>
            <person name="O'Dell C.N."/>
            <person name="Oliver K."/>
            <person name="Palmeiri A."/>
            <person name="Palmer S.A."/>
            <person name="Parker A."/>
            <person name="Patel D."/>
            <person name="Pearce A.V."/>
            <person name="Peck A.I."/>
            <person name="Pelan S."/>
            <person name="Phelps K."/>
            <person name="Phillimore B.J."/>
            <person name="Plumb R."/>
            <person name="Rajan J."/>
            <person name="Raymond C."/>
            <person name="Rouse G."/>
            <person name="Saenphimmachak C."/>
            <person name="Sehra H.K."/>
            <person name="Sheridan E."/>
            <person name="Shownkeen R."/>
            <person name="Sims S."/>
            <person name="Skuce C.D."/>
            <person name="Smith M."/>
            <person name="Steward C."/>
            <person name="Subramanian S."/>
            <person name="Sycamore N."/>
            <person name="Tracey A."/>
            <person name="Tromans A."/>
            <person name="Van Helmond Z."/>
            <person name="Wall M."/>
            <person name="Wallis J.M."/>
            <person name="White S."/>
            <person name="Whitehead S.L."/>
            <person name="Wilkinson J.E."/>
            <person name="Willey D.L."/>
            <person name="Williams H."/>
            <person name="Wilming L."/>
            <person name="Wray P.W."/>
            <person name="Wu Z."/>
            <person name="Coulson A."/>
            <person name="Vaudin M."/>
            <person name="Sulston J.E."/>
            <person name="Durbin R.M."/>
            <person name="Hubbard T."/>
            <person name="Wooster R."/>
            <person name="Dunham I."/>
            <person name="Carter N.P."/>
            <person name="McVean G."/>
            <person name="Ross M.T."/>
            <person name="Harrow J."/>
            <person name="Olson M.V."/>
            <person name="Beck S."/>
            <person name="Rogers J."/>
            <person name="Bentley D.R."/>
        </authorList>
    </citation>
    <scope>NUCLEOTIDE SEQUENCE [LARGE SCALE GENOMIC DNA]</scope>
</reference>
<reference key="7">
    <citation type="submission" date="2005-09" db="EMBL/GenBank/DDBJ databases">
        <authorList>
            <person name="Mural R.J."/>
            <person name="Istrail S."/>
            <person name="Sutton G.G."/>
            <person name="Florea L."/>
            <person name="Halpern A.L."/>
            <person name="Mobarry C.M."/>
            <person name="Lippert R."/>
            <person name="Walenz B."/>
            <person name="Shatkay H."/>
            <person name="Dew I."/>
            <person name="Miller J.R."/>
            <person name="Flanigan M.J."/>
            <person name="Edwards N.J."/>
            <person name="Bolanos R."/>
            <person name="Fasulo D."/>
            <person name="Halldorsson B.V."/>
            <person name="Hannenhalli S."/>
            <person name="Turner R."/>
            <person name="Yooseph S."/>
            <person name="Lu F."/>
            <person name="Nusskern D.R."/>
            <person name="Shue B.C."/>
            <person name="Zheng X.H."/>
            <person name="Zhong F."/>
            <person name="Delcher A.L."/>
            <person name="Huson D.H."/>
            <person name="Kravitz S.A."/>
            <person name="Mouchard L."/>
            <person name="Reinert K."/>
            <person name="Remington K.A."/>
            <person name="Clark A.G."/>
            <person name="Waterman M.S."/>
            <person name="Eichler E.E."/>
            <person name="Adams M.D."/>
            <person name="Hunkapiller M.W."/>
            <person name="Myers E.W."/>
            <person name="Venter J.C."/>
        </authorList>
    </citation>
    <scope>NUCLEOTIDE SEQUENCE [LARGE SCALE GENOMIC DNA]</scope>
</reference>
<reference key="8">
    <citation type="journal article" date="2004" name="Genome Res.">
        <title>The status, quality, and expansion of the NIH full-length cDNA project: the Mammalian Gene Collection (MGC).</title>
        <authorList>
            <consortium name="The MGC Project Team"/>
        </authorList>
    </citation>
    <scope>NUCLEOTIDE SEQUENCE [LARGE SCALE MRNA] (ISOFORMS 1 AND 2)</scope>
    <source>
        <tissue>Skin</tissue>
    </source>
</reference>
<reference key="9">
    <citation type="journal article" date="2003" name="J. Biol. Chem.">
        <title>The pro-apoptotic Ras effector Nore1 may serve as a Ras-regulated tumor suppressor in the lung.</title>
        <authorList>
            <person name="Vos M.D."/>
            <person name="Martinez A."/>
            <person name="Ellis C.A."/>
            <person name="Vallecorsa T."/>
            <person name="Clark G.J."/>
        </authorList>
    </citation>
    <scope>FUNCTION AS A TUMOR SUPPRESSOR</scope>
    <scope>TISSUE SPECIFICITY</scope>
</reference>
<reference key="10">
    <citation type="journal article" date="2004" name="Biochem. J.">
        <title>Regulation of the MST1 kinase by autophosphorylation, by the growth inhibitory proteins, RASSF1 and NORE1, and by Ras.</title>
        <authorList>
            <person name="Praskova M."/>
            <person name="Khoklatchev A."/>
            <person name="Ortiz-Vega S."/>
            <person name="Avruch J."/>
        </authorList>
    </citation>
    <scope>INTERACTION WITH STK4/MST1</scope>
</reference>
<reference key="11">
    <citation type="journal article" date="2005" name="J. Biol. Chem.">
        <title>Local activation of Rap1 contributes to directional vascular endothelial cell migration accompanied by extension of microtubules on which RAPL, a Rap1-associating molecule, localizes.</title>
        <authorList>
            <person name="Fujita H."/>
            <person name="Fukuhara S."/>
            <person name="Sakurai A."/>
            <person name="Yamagishi A."/>
            <person name="Kamioka Y."/>
            <person name="Nakaoka Y."/>
            <person name="Masuda M."/>
            <person name="Mochizuki N."/>
        </authorList>
    </citation>
    <scope>FUNCTION IN MICROTUBULE GROWTH REGULATION</scope>
    <scope>SUBCELLULAR LOCATION</scope>
    <scope>INTERACTION WITH RAP1A</scope>
</reference>
<reference key="12">
    <citation type="journal article" date="2008" name="Mol. Cell">
        <title>Kinase-selective enrichment enables quantitative phosphoproteomics of the kinome across the cell cycle.</title>
        <authorList>
            <person name="Daub H."/>
            <person name="Olsen J.V."/>
            <person name="Bairlein M."/>
            <person name="Gnad F."/>
            <person name="Oppermann F.S."/>
            <person name="Korner R."/>
            <person name="Greff Z."/>
            <person name="Keri G."/>
            <person name="Stemmann O."/>
            <person name="Mann M."/>
        </authorList>
    </citation>
    <scope>PHOSPHORYLATION [LARGE SCALE ANALYSIS] AT THR-352</scope>
    <scope>IDENTIFICATION BY MASS SPECTROMETRY [LARGE SCALE ANALYSIS]</scope>
    <source>
        <tissue>Cervix carcinoma</tissue>
    </source>
</reference>
<reference key="13">
    <citation type="journal article" date="2009" name="Mol. Cell. Proteomics">
        <title>Large-scale proteomics analysis of the human kinome.</title>
        <authorList>
            <person name="Oppermann F.S."/>
            <person name="Gnad F."/>
            <person name="Olsen J.V."/>
            <person name="Hornberger R."/>
            <person name="Greff Z."/>
            <person name="Keri G."/>
            <person name="Mann M."/>
            <person name="Daub H."/>
        </authorList>
    </citation>
    <scope>ACETYLATION [LARGE SCALE ANALYSIS] AT THR-2 (ISOFORM 2)</scope>
    <scope>PHOSPHORYLATION [LARGE SCALE ANALYSIS] AT THR-352</scope>
    <scope>CLEAVAGE OF INITIATOR METHIONINE [LARGE SCALE ANALYSIS] (ISOFORM 2)</scope>
    <scope>IDENTIFICATION BY MASS SPECTROMETRY [LARGE SCALE ANALYSIS]</scope>
</reference>
<reference key="14">
    <citation type="journal article" date="2011" name="BMC Syst. Biol.">
        <title>Initial characterization of the human central proteome.</title>
        <authorList>
            <person name="Burkard T.R."/>
            <person name="Planyavsky M."/>
            <person name="Kaupe I."/>
            <person name="Breitwieser F.P."/>
            <person name="Buerckstuemmer T."/>
            <person name="Bennett K.L."/>
            <person name="Superti-Furga G."/>
            <person name="Colinge J."/>
        </authorList>
    </citation>
    <scope>IDENTIFICATION BY MASS SPECTROMETRY [LARGE SCALE ANALYSIS]</scope>
</reference>
<reference key="15">
    <citation type="journal article" date="2013" name="J. Proteome Res.">
        <title>Toward a comprehensive characterization of a human cancer cell phosphoproteome.</title>
        <authorList>
            <person name="Zhou H."/>
            <person name="Di Palma S."/>
            <person name="Preisinger C."/>
            <person name="Peng M."/>
            <person name="Polat A.N."/>
            <person name="Heck A.J."/>
            <person name="Mohammed S."/>
        </authorList>
    </citation>
    <scope>PHOSPHORYLATION [LARGE SCALE ANALYSIS] AT SER-279</scope>
    <scope>IDENTIFICATION BY MASS SPECTROMETRY [LARGE SCALE ANALYSIS]</scope>
    <source>
        <tissue>Erythroleukemia</tissue>
    </source>
</reference>
<reference key="16">
    <citation type="journal article" date="2019" name="Am. J. Hum. Genet.">
        <title>Activating Mutations of RRAS2 Are a Rare Cause of Noonan Syndrome.</title>
        <authorList>
            <person name="Capri Y."/>
            <person name="Flex E."/>
            <person name="Krumbach O.H.F."/>
            <person name="Carpentieri G."/>
            <person name="Cecchetti S."/>
            <person name="Lissewski C."/>
            <person name="Rezaei Adariani S."/>
            <person name="Schanze D."/>
            <person name="Brinkmann J."/>
            <person name="Piard J."/>
            <person name="Pantaleoni F."/>
            <person name="Lepri F.R."/>
            <person name="Goh E.S."/>
            <person name="Chong K."/>
            <person name="Stieglitz E."/>
            <person name="Meyer J."/>
            <person name="Kuechler A."/>
            <person name="Bramswig N.C."/>
            <person name="Sacharow S."/>
            <person name="Strullu M."/>
            <person name="Vial Y."/>
            <person name="Vignal C."/>
            <person name="Kensah G."/>
            <person name="Cuturilo G."/>
            <person name="Kazemein Jasemi N.S."/>
            <person name="Dvorsky R."/>
            <person name="Monaghan K.G."/>
            <person name="Vincent L.M."/>
            <person name="Cave H."/>
            <person name="Verloes A."/>
            <person name="Ahmadian M.R."/>
            <person name="Tartaglia M."/>
            <person name="Zenker M."/>
        </authorList>
    </citation>
    <scope>INTERACTION WITH RRAS2</scope>
</reference>
<evidence type="ECO:0000250" key="1">
    <source>
        <dbReference type="UniProtKB" id="Q5EBH1"/>
    </source>
</evidence>
<evidence type="ECO:0000255" key="2">
    <source>
        <dbReference type="PROSITE-ProRule" id="PRU00166"/>
    </source>
</evidence>
<evidence type="ECO:0000255" key="3">
    <source>
        <dbReference type="PROSITE-ProRule" id="PRU00226"/>
    </source>
</evidence>
<evidence type="ECO:0000255" key="4">
    <source>
        <dbReference type="PROSITE-ProRule" id="PRU00310"/>
    </source>
</evidence>
<evidence type="ECO:0000256" key="5">
    <source>
        <dbReference type="SAM" id="MobiDB-lite"/>
    </source>
</evidence>
<evidence type="ECO:0000269" key="6">
    <source>
    </source>
</evidence>
<evidence type="ECO:0000269" key="7">
    <source>
    </source>
</evidence>
<evidence type="ECO:0000269" key="8">
    <source>
    </source>
</evidence>
<evidence type="ECO:0000269" key="9">
    <source>
    </source>
</evidence>
<evidence type="ECO:0000269" key="10">
    <source>
    </source>
</evidence>
<evidence type="ECO:0000269" key="11">
    <source>
    </source>
</evidence>
<evidence type="ECO:0000303" key="12">
    <source>
    </source>
</evidence>
<evidence type="ECO:0000303" key="13">
    <source>
    </source>
</evidence>
<evidence type="ECO:0000303" key="14">
    <source>
    </source>
</evidence>
<evidence type="ECO:0000303" key="15">
    <source>
    </source>
</evidence>
<evidence type="ECO:0000303" key="16">
    <source ref="3"/>
</evidence>
<evidence type="ECO:0000305" key="17"/>
<evidence type="ECO:0007744" key="18">
    <source>
    </source>
</evidence>
<evidence type="ECO:0007744" key="19">
    <source>
    </source>
</evidence>
<evidence type="ECO:0007744" key="20">
    <source>
    </source>
</evidence>
<evidence type="ECO:0007829" key="21">
    <source>
        <dbReference type="PDB" id="4OH8"/>
    </source>
</evidence>
<protein>
    <recommendedName>
        <fullName>Ras association domain-containing protein 5</fullName>
    </recommendedName>
    <alternativeName>
        <fullName>New ras effector 1</fullName>
    </alternativeName>
    <alternativeName>
        <fullName>Regulator for cell adhesion and polarization enriched in lymphoid tissues</fullName>
        <shortName>RAPL</shortName>
    </alternativeName>
</protein>
<keyword id="KW-0002">3D-structure</keyword>
<keyword id="KW-0007">Acetylation</keyword>
<keyword id="KW-0025">Alternative splicing</keyword>
<keyword id="KW-0053">Apoptosis</keyword>
<keyword id="KW-0963">Cytoplasm</keyword>
<keyword id="KW-0206">Cytoskeleton</keyword>
<keyword id="KW-0479">Metal-binding</keyword>
<keyword id="KW-0493">Microtubule</keyword>
<keyword id="KW-0597">Phosphoprotein</keyword>
<keyword id="KW-1267">Proteomics identification</keyword>
<keyword id="KW-1185">Reference proteome</keyword>
<keyword id="KW-0043">Tumor suppressor</keyword>
<keyword id="KW-0862">Zinc</keyword>
<keyword id="KW-0863">Zinc-finger</keyword>
<dbReference type="EMBL" id="AF445801">
    <property type="protein sequence ID" value="AAL38592.1"/>
    <property type="molecule type" value="mRNA"/>
</dbReference>
<dbReference type="EMBL" id="AY261332">
    <property type="protein sequence ID" value="AAP83360.1"/>
    <property type="molecule type" value="mRNA"/>
</dbReference>
<dbReference type="EMBL" id="AY062002">
    <property type="protein sequence ID" value="AAL40388.1"/>
    <property type="molecule type" value="mRNA"/>
</dbReference>
<dbReference type="EMBL" id="AY062003">
    <property type="protein sequence ID" value="AAL40389.1"/>
    <property type="molecule type" value="mRNA"/>
</dbReference>
<dbReference type="EMBL" id="AY216268">
    <property type="protein sequence ID" value="AAO61668.1"/>
    <property type="molecule type" value="mRNA"/>
</dbReference>
<dbReference type="EMBL" id="AK289861">
    <property type="protein sequence ID" value="BAF82550.1"/>
    <property type="molecule type" value="mRNA"/>
</dbReference>
<dbReference type="EMBL" id="AL832784">
    <property type="protein sequence ID" value="CAI46164.1"/>
    <property type="molecule type" value="mRNA"/>
</dbReference>
<dbReference type="EMBL" id="AL591846">
    <property type="protein sequence ID" value="CAI13536.1"/>
    <property type="molecule type" value="Genomic_DNA"/>
</dbReference>
<dbReference type="EMBL" id="AL354681">
    <property type="protein sequence ID" value="CAI13536.1"/>
    <property type="status" value="JOINED"/>
    <property type="molecule type" value="Genomic_DNA"/>
</dbReference>
<dbReference type="EMBL" id="AL591846">
    <property type="protein sequence ID" value="CAI13538.1"/>
    <property type="molecule type" value="Genomic_DNA"/>
</dbReference>
<dbReference type="EMBL" id="AL354681">
    <property type="protein sequence ID" value="CAI13538.1"/>
    <property type="status" value="JOINED"/>
    <property type="molecule type" value="Genomic_DNA"/>
</dbReference>
<dbReference type="EMBL" id="AL354681">
    <property type="protein sequence ID" value="CAI15252.1"/>
    <property type="molecule type" value="Genomic_DNA"/>
</dbReference>
<dbReference type="EMBL" id="AL591846">
    <property type="protein sequence ID" value="CAI15252.1"/>
    <property type="status" value="JOINED"/>
    <property type="molecule type" value="Genomic_DNA"/>
</dbReference>
<dbReference type="EMBL" id="AL591846">
    <property type="protein sequence ID" value="CAI13537.1"/>
    <property type="molecule type" value="Genomic_DNA"/>
</dbReference>
<dbReference type="EMBL" id="AL354681">
    <property type="protein sequence ID" value="CAI13537.1"/>
    <property type="status" value="JOINED"/>
    <property type="molecule type" value="Genomic_DNA"/>
</dbReference>
<dbReference type="EMBL" id="AL591846">
    <property type="protein sequence ID" value="CAI13542.1"/>
    <property type="molecule type" value="Genomic_DNA"/>
</dbReference>
<dbReference type="EMBL" id="AL354681">
    <property type="protein sequence ID" value="CAI13542.1"/>
    <property type="status" value="JOINED"/>
    <property type="molecule type" value="Genomic_DNA"/>
</dbReference>
<dbReference type="EMBL" id="AL354681">
    <property type="protein sequence ID" value="CAI15253.1"/>
    <property type="molecule type" value="Genomic_DNA"/>
</dbReference>
<dbReference type="EMBL" id="AL591846">
    <property type="protein sequence ID" value="CAI15253.1"/>
    <property type="status" value="JOINED"/>
    <property type="molecule type" value="Genomic_DNA"/>
</dbReference>
<dbReference type="EMBL" id="AL354681">
    <property type="protein sequence ID" value="CAI15254.1"/>
    <property type="molecule type" value="Genomic_DNA"/>
</dbReference>
<dbReference type="EMBL" id="AL591846">
    <property type="protein sequence ID" value="CAI15254.1"/>
    <property type="status" value="JOINED"/>
    <property type="molecule type" value="Genomic_DNA"/>
</dbReference>
<dbReference type="EMBL" id="AL354681">
    <property type="protein sequence ID" value="CAI15256.1"/>
    <property type="molecule type" value="Genomic_DNA"/>
</dbReference>
<dbReference type="EMBL" id="AL591846">
    <property type="protein sequence ID" value="CAI15256.1"/>
    <property type="status" value="JOINED"/>
    <property type="molecule type" value="Genomic_DNA"/>
</dbReference>
<dbReference type="EMBL" id="CH471100">
    <property type="protein sequence ID" value="EAW93544.1"/>
    <property type="molecule type" value="Genomic_DNA"/>
</dbReference>
<dbReference type="EMBL" id="BC004270">
    <property type="protein sequence ID" value="AAH04270.1"/>
    <property type="status" value="ALT_SEQ"/>
    <property type="molecule type" value="mRNA"/>
</dbReference>
<dbReference type="EMBL" id="BC007203">
    <property type="protein sequence ID" value="AAH07203.1"/>
    <property type="status" value="ALT_SEQ"/>
    <property type="molecule type" value="mRNA"/>
</dbReference>
<dbReference type="EMBL" id="BC042651">
    <property type="protein sequence ID" value="AAH42651.1"/>
    <property type="molecule type" value="mRNA"/>
</dbReference>
<dbReference type="CCDS" id="CCDS1463.1">
    <molecule id="Q8WWW0-3"/>
</dbReference>
<dbReference type="CCDS" id="CCDS1464.1">
    <molecule id="Q8WWW0-2"/>
</dbReference>
<dbReference type="CCDS" id="CCDS30998.1">
    <molecule id="Q8WWW0-1"/>
</dbReference>
<dbReference type="RefSeq" id="NP_872604.1">
    <molecule id="Q8WWW0-1"/>
    <property type="nucleotide sequence ID" value="NM_182663.4"/>
</dbReference>
<dbReference type="RefSeq" id="NP_872605.1">
    <molecule id="Q8WWW0-3"/>
    <property type="nucleotide sequence ID" value="NM_182664.4"/>
</dbReference>
<dbReference type="RefSeq" id="NP_872606.1">
    <molecule id="Q8WWW0-2"/>
    <property type="nucleotide sequence ID" value="NM_182665.4"/>
</dbReference>
<dbReference type="PDB" id="4LGD">
    <property type="method" value="X-ray"/>
    <property type="resolution" value="3.05 A"/>
    <property type="chains" value="E/F/G/H=365-413"/>
</dbReference>
<dbReference type="PDB" id="4OH8">
    <property type="method" value="X-ray"/>
    <property type="resolution" value="2.28 A"/>
    <property type="chains" value="B=366-418"/>
</dbReference>
<dbReference type="PDBsum" id="4LGD"/>
<dbReference type="PDBsum" id="4OH8"/>
<dbReference type="SMR" id="Q8WWW0"/>
<dbReference type="BioGRID" id="123689">
    <property type="interactions" value="49"/>
</dbReference>
<dbReference type="DIP" id="DIP-32490N"/>
<dbReference type="FunCoup" id="Q8WWW0">
    <property type="interactions" value="1710"/>
</dbReference>
<dbReference type="IntAct" id="Q8WWW0">
    <property type="interactions" value="55"/>
</dbReference>
<dbReference type="MINT" id="Q8WWW0"/>
<dbReference type="STRING" id="9606.ENSP00000462099"/>
<dbReference type="iPTMnet" id="Q8WWW0"/>
<dbReference type="PhosphoSitePlus" id="Q8WWW0"/>
<dbReference type="BioMuta" id="RASSF5"/>
<dbReference type="DMDM" id="74751587"/>
<dbReference type="jPOST" id="Q8WWW0"/>
<dbReference type="MassIVE" id="Q8WWW0"/>
<dbReference type="PaxDb" id="9606-ENSP00000462099"/>
<dbReference type="PeptideAtlas" id="Q8WWW0"/>
<dbReference type="ProteomicsDB" id="74944">
    <molecule id="Q8WWW0-1"/>
</dbReference>
<dbReference type="ProteomicsDB" id="74945">
    <molecule id="Q8WWW0-2"/>
</dbReference>
<dbReference type="ProteomicsDB" id="74946">
    <molecule id="Q8WWW0-3"/>
</dbReference>
<dbReference type="Pumba" id="Q8WWW0"/>
<dbReference type="Antibodypedia" id="73646">
    <property type="antibodies" value="291 antibodies from 31 providers"/>
</dbReference>
<dbReference type="DNASU" id="83593"/>
<dbReference type="Ensembl" id="ENST00000577571.5">
    <molecule id="Q8WWW0-2"/>
    <property type="protein sequence ID" value="ENSP00000462576.1"/>
    <property type="gene ID" value="ENSG00000266094.8"/>
</dbReference>
<dbReference type="Ensembl" id="ENST00000579436.7">
    <molecule id="Q8WWW0-1"/>
    <property type="protein sequence ID" value="ENSP00000462099.1"/>
    <property type="gene ID" value="ENSG00000266094.8"/>
</dbReference>
<dbReference type="Ensembl" id="ENST00000580449.5">
    <molecule id="Q8WWW0-3"/>
    <property type="protein sequence ID" value="ENSP00000462544.1"/>
    <property type="gene ID" value="ENSG00000266094.8"/>
</dbReference>
<dbReference type="GeneID" id="83593"/>
<dbReference type="KEGG" id="hsa:83593"/>
<dbReference type="MANE-Select" id="ENST00000579436.7">
    <property type="protein sequence ID" value="ENSP00000462099.1"/>
    <property type="RefSeq nucleotide sequence ID" value="NM_182663.4"/>
    <property type="RefSeq protein sequence ID" value="NP_872604.1"/>
</dbReference>
<dbReference type="UCSC" id="uc031vlp.2">
    <molecule id="Q8WWW0-1"/>
    <property type="organism name" value="human"/>
</dbReference>
<dbReference type="AGR" id="HGNC:17609"/>
<dbReference type="CTD" id="83593"/>
<dbReference type="DisGeNET" id="83593"/>
<dbReference type="GeneCards" id="RASSF5"/>
<dbReference type="HGNC" id="HGNC:17609">
    <property type="gene designation" value="RASSF5"/>
</dbReference>
<dbReference type="HPA" id="ENSG00000266094">
    <property type="expression patterns" value="Tissue enhanced (bone marrow, lymphoid tissue)"/>
</dbReference>
<dbReference type="MIM" id="607020">
    <property type="type" value="gene"/>
</dbReference>
<dbReference type="neXtProt" id="NX_Q8WWW0"/>
<dbReference type="OpenTargets" id="ENSG00000266094"/>
<dbReference type="PharmGKB" id="PA134958571"/>
<dbReference type="VEuPathDB" id="HostDB:ENSG00000266094"/>
<dbReference type="eggNOG" id="KOG4239">
    <property type="taxonomic scope" value="Eukaryota"/>
</dbReference>
<dbReference type="GeneTree" id="ENSGT00940000159288"/>
<dbReference type="HOGENOM" id="CLU_045544_0_0_1"/>
<dbReference type="InParanoid" id="Q8WWW0"/>
<dbReference type="OrthoDB" id="74314at2759"/>
<dbReference type="PAN-GO" id="Q8WWW0">
    <property type="GO annotations" value="2 GO annotations based on evolutionary models"/>
</dbReference>
<dbReference type="PhylomeDB" id="Q8WWW0"/>
<dbReference type="TreeFam" id="TF319243"/>
<dbReference type="PathwayCommons" id="Q8WWW0"/>
<dbReference type="SignaLink" id="Q8WWW0"/>
<dbReference type="SIGNOR" id="Q8WWW0"/>
<dbReference type="BioGRID-ORCS" id="83593">
    <property type="hits" value="11 hits in 1148 CRISPR screens"/>
</dbReference>
<dbReference type="CD-CODE" id="8C2F96ED">
    <property type="entry name" value="Centrosome"/>
</dbReference>
<dbReference type="ChiTaRS" id="RASSF5">
    <property type="organism name" value="human"/>
</dbReference>
<dbReference type="EvolutionaryTrace" id="Q8WWW0"/>
<dbReference type="GeneWiki" id="RASSF5"/>
<dbReference type="GenomeRNAi" id="83593"/>
<dbReference type="Pharos" id="Q8WWW0">
    <property type="development level" value="Tbio"/>
</dbReference>
<dbReference type="PRO" id="PR:Q8WWW0"/>
<dbReference type="Proteomes" id="UP000005640">
    <property type="component" value="Chromosome 1"/>
</dbReference>
<dbReference type="RNAct" id="Q8WWW0">
    <property type="molecule type" value="protein"/>
</dbReference>
<dbReference type="Bgee" id="ENSG00000266094">
    <property type="expression patterns" value="Expressed in upper arm skin and 181 other cell types or tissues"/>
</dbReference>
<dbReference type="ExpressionAtlas" id="Q8WWW0">
    <property type="expression patterns" value="baseline and differential"/>
</dbReference>
<dbReference type="GO" id="GO:0005737">
    <property type="term" value="C:cytoplasm"/>
    <property type="evidence" value="ECO:0007669"/>
    <property type="project" value="UniProtKB-SubCell"/>
</dbReference>
<dbReference type="GO" id="GO:0005874">
    <property type="term" value="C:microtubule"/>
    <property type="evidence" value="ECO:0007669"/>
    <property type="project" value="UniProtKB-KW"/>
</dbReference>
<dbReference type="GO" id="GO:0005634">
    <property type="term" value="C:nucleus"/>
    <property type="evidence" value="ECO:0000318"/>
    <property type="project" value="GO_Central"/>
</dbReference>
<dbReference type="GO" id="GO:0042802">
    <property type="term" value="F:identical protein binding"/>
    <property type="evidence" value="ECO:0000353"/>
    <property type="project" value="IntAct"/>
</dbReference>
<dbReference type="GO" id="GO:0008270">
    <property type="term" value="F:zinc ion binding"/>
    <property type="evidence" value="ECO:0007669"/>
    <property type="project" value="UniProtKB-KW"/>
</dbReference>
<dbReference type="GO" id="GO:0006915">
    <property type="term" value="P:apoptotic process"/>
    <property type="evidence" value="ECO:0007669"/>
    <property type="project" value="UniProtKB-KW"/>
</dbReference>
<dbReference type="GO" id="GO:0046651">
    <property type="term" value="P:lymphocyte proliferation"/>
    <property type="evidence" value="ECO:0007669"/>
    <property type="project" value="Ensembl"/>
</dbReference>
<dbReference type="GO" id="GO:0050672">
    <property type="term" value="P:negative regulation of lymphocyte proliferation"/>
    <property type="evidence" value="ECO:0007669"/>
    <property type="project" value="Ensembl"/>
</dbReference>
<dbReference type="GO" id="GO:0031398">
    <property type="term" value="P:positive regulation of protein ubiquitination"/>
    <property type="evidence" value="ECO:0007669"/>
    <property type="project" value="Ensembl"/>
</dbReference>
<dbReference type="GO" id="GO:1900180">
    <property type="term" value="P:regulation of protein localization to nucleus"/>
    <property type="evidence" value="ECO:0007669"/>
    <property type="project" value="Ensembl"/>
</dbReference>
<dbReference type="GO" id="GO:0007165">
    <property type="term" value="P:signal transduction"/>
    <property type="evidence" value="ECO:0000318"/>
    <property type="project" value="GO_Central"/>
</dbReference>
<dbReference type="CDD" id="cd20886">
    <property type="entry name" value="C1_RASSF5"/>
    <property type="match status" value="1"/>
</dbReference>
<dbReference type="CDD" id="cd17220">
    <property type="entry name" value="RA_RASSF5"/>
    <property type="match status" value="1"/>
</dbReference>
<dbReference type="CDD" id="cd21892">
    <property type="entry name" value="SARAH_RASSF5"/>
    <property type="match status" value="1"/>
</dbReference>
<dbReference type="FunFam" id="3.10.20.90:FF:000048">
    <property type="entry name" value="Ras association domain family member 1"/>
    <property type="match status" value="1"/>
</dbReference>
<dbReference type="FunFam" id="1.20.5.110:FF:000032">
    <property type="entry name" value="Ras association domain family member 5"/>
    <property type="match status" value="1"/>
</dbReference>
<dbReference type="FunFam" id="3.30.60.20:FF:000057">
    <property type="entry name" value="Ras association domain family member 5"/>
    <property type="match status" value="1"/>
</dbReference>
<dbReference type="Gene3D" id="1.20.5.110">
    <property type="match status" value="1"/>
</dbReference>
<dbReference type="Gene3D" id="3.30.60.20">
    <property type="match status" value="1"/>
</dbReference>
<dbReference type="Gene3D" id="3.10.20.90">
    <property type="entry name" value="Phosphatidylinositol 3-kinase Catalytic Subunit, Chain A, domain 1"/>
    <property type="match status" value="1"/>
</dbReference>
<dbReference type="IDEAL" id="IID00631"/>
<dbReference type="InterPro" id="IPR046349">
    <property type="entry name" value="C1-like_sf"/>
</dbReference>
<dbReference type="InterPro" id="IPR002219">
    <property type="entry name" value="PE/DAG-bd"/>
</dbReference>
<dbReference type="InterPro" id="IPR000159">
    <property type="entry name" value="RA_dom"/>
</dbReference>
<dbReference type="InterPro" id="IPR033614">
    <property type="entry name" value="RASSF1-6"/>
</dbReference>
<dbReference type="InterPro" id="IPR033623">
    <property type="entry name" value="RASSF5_RA"/>
</dbReference>
<dbReference type="InterPro" id="IPR011524">
    <property type="entry name" value="SARAH_dom"/>
</dbReference>
<dbReference type="InterPro" id="IPR029071">
    <property type="entry name" value="Ubiquitin-like_domsf"/>
</dbReference>
<dbReference type="PANTHER" id="PTHR22738:SF9">
    <property type="entry name" value="RAS ASSOCIATION DOMAIN-CONTAINING PROTEIN 5"/>
    <property type="match status" value="1"/>
</dbReference>
<dbReference type="PANTHER" id="PTHR22738">
    <property type="entry name" value="RASSF"/>
    <property type="match status" value="1"/>
</dbReference>
<dbReference type="Pfam" id="PF00130">
    <property type="entry name" value="C1_1"/>
    <property type="match status" value="1"/>
</dbReference>
<dbReference type="Pfam" id="PF16517">
    <property type="entry name" value="Nore1-SARAH"/>
    <property type="match status" value="1"/>
</dbReference>
<dbReference type="Pfam" id="PF00788">
    <property type="entry name" value="RA"/>
    <property type="match status" value="1"/>
</dbReference>
<dbReference type="SMART" id="SM00109">
    <property type="entry name" value="C1"/>
    <property type="match status" value="1"/>
</dbReference>
<dbReference type="SMART" id="SM00314">
    <property type="entry name" value="RA"/>
    <property type="match status" value="1"/>
</dbReference>
<dbReference type="SUPFAM" id="SSF57889">
    <property type="entry name" value="Cysteine-rich domain"/>
    <property type="match status" value="1"/>
</dbReference>
<dbReference type="SUPFAM" id="SSF54236">
    <property type="entry name" value="Ubiquitin-like"/>
    <property type="match status" value="1"/>
</dbReference>
<dbReference type="PROSITE" id="PS50200">
    <property type="entry name" value="RA"/>
    <property type="match status" value="1"/>
</dbReference>
<dbReference type="PROSITE" id="PS50951">
    <property type="entry name" value="SARAH"/>
    <property type="match status" value="1"/>
</dbReference>
<dbReference type="PROSITE" id="PS00479">
    <property type="entry name" value="ZF_DAG_PE_1"/>
    <property type="match status" value="1"/>
</dbReference>
<dbReference type="PROSITE" id="PS50081">
    <property type="entry name" value="ZF_DAG_PE_2"/>
    <property type="match status" value="1"/>
</dbReference>
<feature type="chain" id="PRO_0000240401" description="Ras association domain-containing protein 5">
    <location>
        <begin position="1"/>
        <end position="418"/>
    </location>
</feature>
<feature type="domain" description="Ras-associating" evidence="2">
    <location>
        <begin position="274"/>
        <end position="364"/>
    </location>
</feature>
<feature type="domain" description="SARAH" evidence="4">
    <location>
        <begin position="366"/>
        <end position="413"/>
    </location>
</feature>
<feature type="zinc finger region" description="Phorbol-ester/DAG-type" evidence="3">
    <location>
        <begin position="122"/>
        <end position="170"/>
    </location>
</feature>
<feature type="region of interest" description="Disordered" evidence="5">
    <location>
        <begin position="1"/>
        <end position="118"/>
    </location>
</feature>
<feature type="compositionally biased region" description="Low complexity" evidence="5">
    <location>
        <begin position="77"/>
        <end position="89"/>
    </location>
</feature>
<feature type="modified residue" description="Phosphoserine" evidence="1">
    <location>
        <position position="182"/>
    </location>
</feature>
<feature type="modified residue" description="Phosphoserine" evidence="20">
    <location>
        <position position="279"/>
    </location>
</feature>
<feature type="modified residue" description="Phosphothreonine" evidence="18 19">
    <location>
        <position position="352"/>
    </location>
</feature>
<feature type="splice variant" id="VSP_019363" description="In isoform 2." evidence="12 13 14 15 16">
    <location>
        <begin position="1"/>
        <end position="153"/>
    </location>
</feature>
<feature type="splice variant" id="VSP_019364" description="In isoform 2." evidence="12 13 14 15 16">
    <original>CKFTCHPECRSLIQLDCSQQEGLSRDRPSPESTLTVTFSQ</original>
    <variation>MTVDSSMSSGYCSLDEELEDCFFTAKTTFFRNAQSKHLSK</variation>
    <location>
        <begin position="154"/>
        <end position="193"/>
    </location>
</feature>
<feature type="splice variant" id="VSP_019365" description="In isoform 3." evidence="16">
    <original>LFQKLS</original>
    <variation>GCLLHP</variation>
    <location>
        <begin position="331"/>
        <end position="336"/>
    </location>
</feature>
<feature type="splice variant" id="VSP_019366" description="In isoform 3." evidence="16">
    <location>
        <begin position="337"/>
        <end position="418"/>
    </location>
</feature>
<feature type="helix" evidence="21">
    <location>
        <begin position="369"/>
        <end position="371"/>
    </location>
</feature>
<feature type="helix" evidence="21">
    <location>
        <begin position="374"/>
        <end position="411"/>
    </location>
</feature>
<feature type="initiator methionine" description="Removed" evidence="19">
    <location sequence="Q8WWW0-2">
        <position position="1"/>
    </location>
</feature>
<feature type="modified residue" description="N-acetylthreonine" evidence="19">
    <location sequence="Q8WWW0-2">
        <position position="2"/>
    </location>
</feature>
<name>RASF5_HUMAN</name>